<protein>
    <recommendedName>
        <fullName evidence="1">ATP synthase subunit c, chloroplastic</fullName>
    </recommendedName>
    <alternativeName>
        <fullName evidence="1">ATP synthase F(0) sector subunit c</fullName>
    </alternativeName>
    <alternativeName>
        <fullName evidence="1">ATPase subunit III</fullName>
    </alternativeName>
    <alternativeName>
        <fullName evidence="1">F-type ATPase subunit c</fullName>
        <shortName evidence="1">F-ATPase subunit c</shortName>
    </alternativeName>
    <alternativeName>
        <fullName evidence="1">Lipid-binding protein</fullName>
    </alternativeName>
</protein>
<comment type="function">
    <text evidence="1">F(1)F(0) ATP synthase produces ATP from ADP in the presence of a proton or sodium gradient. F-type ATPases consist of two structural domains, F(1) containing the extramembraneous catalytic core and F(0) containing the membrane proton channel, linked together by a central stalk and a peripheral stalk. During catalysis, ATP synthesis in the catalytic domain of F(1) is coupled via a rotary mechanism of the central stalk subunits to proton translocation.</text>
</comment>
<comment type="function">
    <text evidence="1">Key component of the F(0) channel; it plays a direct role in translocation across the membrane. A homomeric c-ring of between 10-14 subunits forms the central stalk rotor element with the F(1) delta and epsilon subunits.</text>
</comment>
<comment type="subunit">
    <text evidence="1">F-type ATPases have 2 components, F(1) - the catalytic core - and F(0) - the membrane proton channel. F(1) has five subunits: alpha(3), beta(3), gamma(1), delta(1), epsilon(1). F(0) has four main subunits: a(1), b(1), b'(1) and c(10-14). The alpha and beta chains form an alternating ring which encloses part of the gamma chain. F(1) is attached to F(0) by a central stalk formed by the gamma and epsilon chains, while a peripheral stalk is formed by the delta, b and b' chains.</text>
</comment>
<comment type="subcellular location">
    <subcellularLocation>
        <location evidence="1">Plastid</location>
        <location evidence="1">Chloroplast thylakoid membrane</location>
        <topology evidence="1">Multi-pass membrane protein</topology>
    </subcellularLocation>
</comment>
<comment type="miscellaneous">
    <text>In plastids the F-type ATPase is also known as CF(1)CF(0).</text>
</comment>
<comment type="similarity">
    <text evidence="1">Belongs to the ATPase C chain family.</text>
</comment>
<comment type="sequence caution" evidence="2">
    <conflict type="erroneous initiation">
        <sequence resource="EMBL-CDS" id="CAL36370"/>
    </conflict>
</comment>
<gene>
    <name evidence="1" type="primary">atpH</name>
    <name type="ordered locus">OtCpg00450</name>
</gene>
<feature type="chain" id="PRO_0000362949" description="ATP synthase subunit c, chloroplastic">
    <location>
        <begin position="1"/>
        <end position="82"/>
    </location>
</feature>
<feature type="transmembrane region" description="Helical" evidence="1">
    <location>
        <begin position="3"/>
        <end position="23"/>
    </location>
</feature>
<feature type="transmembrane region" description="Helical" evidence="1">
    <location>
        <begin position="57"/>
        <end position="77"/>
    </location>
</feature>
<feature type="site" description="Reversibly protonated during proton transport" evidence="1">
    <location>
        <position position="61"/>
    </location>
</feature>
<organism>
    <name type="scientific">Ostreococcus tauri</name>
    <dbReference type="NCBI Taxonomy" id="70448"/>
    <lineage>
        <taxon>Eukaryota</taxon>
        <taxon>Viridiplantae</taxon>
        <taxon>Chlorophyta</taxon>
        <taxon>Mamiellophyceae</taxon>
        <taxon>Mamiellales</taxon>
        <taxon>Bathycoccaceae</taxon>
        <taxon>Ostreococcus</taxon>
    </lineage>
</organism>
<name>ATPH_OSTTA</name>
<proteinExistence type="inferred from homology"/>
<accession>Q0P3K7</accession>
<geneLocation type="chloroplast"/>
<dbReference type="EMBL" id="CR954199">
    <property type="protein sequence ID" value="CAL36370.1"/>
    <property type="status" value="ALT_INIT"/>
    <property type="molecule type" value="Genomic_DNA"/>
</dbReference>
<dbReference type="RefSeq" id="YP_717248.1">
    <property type="nucleotide sequence ID" value="NC_008289.1"/>
</dbReference>
<dbReference type="SMR" id="Q0P3K7"/>
<dbReference type="FunCoup" id="Q0P3K7">
    <property type="interactions" value="77"/>
</dbReference>
<dbReference type="STRING" id="70448.Q0P3K7"/>
<dbReference type="GeneID" id="4238811"/>
<dbReference type="KEGG" id="ota:OstapCp45"/>
<dbReference type="eggNOG" id="KOG0232">
    <property type="taxonomic scope" value="Eukaryota"/>
</dbReference>
<dbReference type="InParanoid" id="Q0P3K7"/>
<dbReference type="Proteomes" id="UP000009170">
    <property type="component" value="Chloroplast"/>
</dbReference>
<dbReference type="GO" id="GO:0009535">
    <property type="term" value="C:chloroplast thylakoid membrane"/>
    <property type="evidence" value="ECO:0007669"/>
    <property type="project" value="UniProtKB-SubCell"/>
</dbReference>
<dbReference type="GO" id="GO:0045259">
    <property type="term" value="C:proton-transporting ATP synthase complex"/>
    <property type="evidence" value="ECO:0007669"/>
    <property type="project" value="UniProtKB-KW"/>
</dbReference>
<dbReference type="GO" id="GO:0033177">
    <property type="term" value="C:proton-transporting two-sector ATPase complex, proton-transporting domain"/>
    <property type="evidence" value="ECO:0007669"/>
    <property type="project" value="InterPro"/>
</dbReference>
<dbReference type="GO" id="GO:0008289">
    <property type="term" value="F:lipid binding"/>
    <property type="evidence" value="ECO:0007669"/>
    <property type="project" value="UniProtKB-KW"/>
</dbReference>
<dbReference type="GO" id="GO:0046933">
    <property type="term" value="F:proton-transporting ATP synthase activity, rotational mechanism"/>
    <property type="evidence" value="ECO:0007669"/>
    <property type="project" value="UniProtKB-UniRule"/>
</dbReference>
<dbReference type="CDD" id="cd18183">
    <property type="entry name" value="ATP-synt_Fo_c_ATPH"/>
    <property type="match status" value="1"/>
</dbReference>
<dbReference type="FunFam" id="1.20.20.10:FF:000001">
    <property type="entry name" value="ATP synthase subunit c, chloroplastic"/>
    <property type="match status" value="1"/>
</dbReference>
<dbReference type="Gene3D" id="1.20.20.10">
    <property type="entry name" value="F1F0 ATP synthase subunit C"/>
    <property type="match status" value="1"/>
</dbReference>
<dbReference type="HAMAP" id="MF_01396">
    <property type="entry name" value="ATP_synth_c_bact"/>
    <property type="match status" value="1"/>
</dbReference>
<dbReference type="InterPro" id="IPR005953">
    <property type="entry name" value="ATP_synth_csu_bac/chlpt"/>
</dbReference>
<dbReference type="InterPro" id="IPR000454">
    <property type="entry name" value="ATP_synth_F0_csu"/>
</dbReference>
<dbReference type="InterPro" id="IPR020537">
    <property type="entry name" value="ATP_synth_F0_csu_DDCD_BS"/>
</dbReference>
<dbReference type="InterPro" id="IPR038662">
    <property type="entry name" value="ATP_synth_F0_csu_sf"/>
</dbReference>
<dbReference type="InterPro" id="IPR002379">
    <property type="entry name" value="ATPase_proteolipid_c-like_dom"/>
</dbReference>
<dbReference type="InterPro" id="IPR035921">
    <property type="entry name" value="F/V-ATP_Csub_sf"/>
</dbReference>
<dbReference type="NCBIfam" id="TIGR01260">
    <property type="entry name" value="ATP_synt_c"/>
    <property type="match status" value="1"/>
</dbReference>
<dbReference type="NCBIfam" id="NF005608">
    <property type="entry name" value="PRK07354.1"/>
    <property type="match status" value="1"/>
</dbReference>
<dbReference type="PANTHER" id="PTHR10031">
    <property type="entry name" value="ATP SYNTHASE LIPID-BINDING PROTEIN, MITOCHONDRIAL"/>
    <property type="match status" value="1"/>
</dbReference>
<dbReference type="PANTHER" id="PTHR10031:SF0">
    <property type="entry name" value="ATPASE PROTEIN 9"/>
    <property type="match status" value="1"/>
</dbReference>
<dbReference type="Pfam" id="PF00137">
    <property type="entry name" value="ATP-synt_C"/>
    <property type="match status" value="1"/>
</dbReference>
<dbReference type="PRINTS" id="PR00124">
    <property type="entry name" value="ATPASEC"/>
</dbReference>
<dbReference type="SUPFAM" id="SSF81333">
    <property type="entry name" value="F1F0 ATP synthase subunit C"/>
    <property type="match status" value="1"/>
</dbReference>
<dbReference type="PROSITE" id="PS00605">
    <property type="entry name" value="ATPASE_C"/>
    <property type="match status" value="1"/>
</dbReference>
<reference key="1">
    <citation type="journal article" date="2007" name="Mol. Biol. Evol.">
        <title>The complete chloroplast and mitochondrial DNA sequence of Ostreococcus tauri: organelle genomes of the smallest eukaryote are examples of compaction.</title>
        <authorList>
            <person name="Robbens S."/>
            <person name="Derelle E."/>
            <person name="Ferraz C."/>
            <person name="Wuyts J."/>
            <person name="Moreau H."/>
            <person name="Van de Peer Y."/>
        </authorList>
    </citation>
    <scope>NUCLEOTIDE SEQUENCE [LARGE SCALE GENOMIC DNA]</scope>
    <source>
        <strain>OTTH0595</strain>
    </source>
</reference>
<keyword id="KW-0066">ATP synthesis</keyword>
<keyword id="KW-0138">CF(0)</keyword>
<keyword id="KW-0150">Chloroplast</keyword>
<keyword id="KW-0375">Hydrogen ion transport</keyword>
<keyword id="KW-0406">Ion transport</keyword>
<keyword id="KW-0446">Lipid-binding</keyword>
<keyword id="KW-0472">Membrane</keyword>
<keyword id="KW-0934">Plastid</keyword>
<keyword id="KW-1185">Reference proteome</keyword>
<keyword id="KW-0793">Thylakoid</keyword>
<keyword id="KW-0812">Transmembrane</keyword>
<keyword id="KW-1133">Transmembrane helix</keyword>
<keyword id="KW-0813">Transport</keyword>
<sequence>MNPLICAASVVGAGLAIGLGAIGPGIGQGTAAGQAVEGIARQPEAEGKIRGTLLLSLAFMEALTIYGLVVALALMFANPFVS</sequence>
<evidence type="ECO:0000255" key="1">
    <source>
        <dbReference type="HAMAP-Rule" id="MF_01396"/>
    </source>
</evidence>
<evidence type="ECO:0000305" key="2"/>